<feature type="chain" id="PRO_1000201385" description="Elongation factor Tu">
    <location>
        <begin position="1"/>
        <end position="395"/>
    </location>
</feature>
<feature type="domain" description="tr-type G">
    <location>
        <begin position="10"/>
        <end position="204"/>
    </location>
</feature>
<feature type="region of interest" description="G1" evidence="1">
    <location>
        <begin position="19"/>
        <end position="26"/>
    </location>
</feature>
<feature type="region of interest" description="G2" evidence="1">
    <location>
        <begin position="60"/>
        <end position="64"/>
    </location>
</feature>
<feature type="region of interest" description="G3" evidence="1">
    <location>
        <begin position="81"/>
        <end position="84"/>
    </location>
</feature>
<feature type="region of interest" description="G4" evidence="1">
    <location>
        <begin position="136"/>
        <end position="139"/>
    </location>
</feature>
<feature type="region of interest" description="G5" evidence="1">
    <location>
        <begin position="174"/>
        <end position="176"/>
    </location>
</feature>
<feature type="binding site" evidence="2">
    <location>
        <begin position="19"/>
        <end position="26"/>
    </location>
    <ligand>
        <name>GTP</name>
        <dbReference type="ChEBI" id="CHEBI:37565"/>
    </ligand>
</feature>
<feature type="binding site" evidence="2">
    <location>
        <position position="26"/>
    </location>
    <ligand>
        <name>Mg(2+)</name>
        <dbReference type="ChEBI" id="CHEBI:18420"/>
    </ligand>
</feature>
<feature type="binding site" evidence="2">
    <location>
        <begin position="81"/>
        <end position="85"/>
    </location>
    <ligand>
        <name>GTP</name>
        <dbReference type="ChEBI" id="CHEBI:37565"/>
    </ligand>
</feature>
<feature type="binding site" evidence="2">
    <location>
        <begin position="136"/>
        <end position="139"/>
    </location>
    <ligand>
        <name>GTP</name>
        <dbReference type="ChEBI" id="CHEBI:37565"/>
    </ligand>
</feature>
<proteinExistence type="inferred from homology"/>
<reference key="1">
    <citation type="submission" date="2008-10" db="EMBL/GenBank/DDBJ databases">
        <title>Genome sequence of Bacillus cereus G9842.</title>
        <authorList>
            <person name="Dodson R.J."/>
            <person name="Durkin A.S."/>
            <person name="Rosovitz M.J."/>
            <person name="Rasko D.A."/>
            <person name="Hoffmaster A."/>
            <person name="Ravel J."/>
            <person name="Sutton G."/>
        </authorList>
    </citation>
    <scope>NUCLEOTIDE SEQUENCE [LARGE SCALE GENOMIC DNA]</scope>
    <source>
        <strain>G9842</strain>
    </source>
</reference>
<accession>B7IT17</accession>
<sequence>MAKAKFERSKPHVNIGTIGHVDHGKTTLTAAITTVLAKAGGAEARGYDQIDAAPEERERGITISTAHVEYETETRHYAHVDCPGHADYVKNMITGAAQMDGGILVVSAADGPMPQTREHILLSRQVGVPYIVVFLNKCDMVDDEELLELVEMEVRDLLSEYGFPGDDIPVIKGSALKALQGEADWEAKIIELMTEVDAYIPTPERETDKPFLMPIEDVFSITGRGTVATGRVERGIVKVGDVVEIIGLAEENASTTVTGVEMFRKLLDQAQAGDNIGALLRGVAREDIQRGQVLAKTGSVKAHAKFKAEVFVLSKEEGGRHTPFFANYRPQFYFRTTDVTGIIQLPEGTEMVMPGDNIEMTIELIAPIAIEEGTKFSIREGGRTVGYGVVATIVE</sequence>
<protein>
    <recommendedName>
        <fullName evidence="2">Elongation factor Tu</fullName>
        <shortName evidence="2">EF-Tu</shortName>
        <ecNumber evidence="2">3.6.5.3</ecNumber>
    </recommendedName>
</protein>
<comment type="function">
    <text evidence="2">GTP hydrolase that promotes the GTP-dependent binding of aminoacyl-tRNA to the A-site of ribosomes during protein biosynthesis.</text>
</comment>
<comment type="catalytic activity">
    <reaction evidence="2">
        <text>GTP + H2O = GDP + phosphate + H(+)</text>
        <dbReference type="Rhea" id="RHEA:19669"/>
        <dbReference type="ChEBI" id="CHEBI:15377"/>
        <dbReference type="ChEBI" id="CHEBI:15378"/>
        <dbReference type="ChEBI" id="CHEBI:37565"/>
        <dbReference type="ChEBI" id="CHEBI:43474"/>
        <dbReference type="ChEBI" id="CHEBI:58189"/>
        <dbReference type="EC" id="3.6.5.3"/>
    </reaction>
    <physiologicalReaction direction="left-to-right" evidence="2">
        <dbReference type="Rhea" id="RHEA:19670"/>
    </physiologicalReaction>
</comment>
<comment type="subunit">
    <text evidence="2">Monomer.</text>
</comment>
<comment type="subcellular location">
    <subcellularLocation>
        <location evidence="2">Cytoplasm</location>
    </subcellularLocation>
</comment>
<comment type="similarity">
    <text evidence="2">Belongs to the TRAFAC class translation factor GTPase superfamily. Classic translation factor GTPase family. EF-Tu/EF-1A subfamily.</text>
</comment>
<evidence type="ECO:0000250" key="1"/>
<evidence type="ECO:0000255" key="2">
    <source>
        <dbReference type="HAMAP-Rule" id="MF_00118"/>
    </source>
</evidence>
<keyword id="KW-0963">Cytoplasm</keyword>
<keyword id="KW-0251">Elongation factor</keyword>
<keyword id="KW-0342">GTP-binding</keyword>
<keyword id="KW-0378">Hydrolase</keyword>
<keyword id="KW-0460">Magnesium</keyword>
<keyword id="KW-0479">Metal-binding</keyword>
<keyword id="KW-0547">Nucleotide-binding</keyword>
<keyword id="KW-0648">Protein biosynthesis</keyword>
<dbReference type="EC" id="3.6.5.3" evidence="2"/>
<dbReference type="EMBL" id="CP001186">
    <property type="protein sequence ID" value="ACK95194.1"/>
    <property type="molecule type" value="Genomic_DNA"/>
</dbReference>
<dbReference type="RefSeq" id="WP_001029617.1">
    <property type="nucleotide sequence ID" value="NC_011772.1"/>
</dbReference>
<dbReference type="SMR" id="B7IT17"/>
<dbReference type="GeneID" id="92798751"/>
<dbReference type="KEGG" id="bcg:BCG9842_B5197"/>
<dbReference type="HOGENOM" id="CLU_007265_0_1_9"/>
<dbReference type="Proteomes" id="UP000006744">
    <property type="component" value="Chromosome"/>
</dbReference>
<dbReference type="GO" id="GO:0005829">
    <property type="term" value="C:cytosol"/>
    <property type="evidence" value="ECO:0007669"/>
    <property type="project" value="TreeGrafter"/>
</dbReference>
<dbReference type="GO" id="GO:0005525">
    <property type="term" value="F:GTP binding"/>
    <property type="evidence" value="ECO:0007669"/>
    <property type="project" value="UniProtKB-UniRule"/>
</dbReference>
<dbReference type="GO" id="GO:0003924">
    <property type="term" value="F:GTPase activity"/>
    <property type="evidence" value="ECO:0007669"/>
    <property type="project" value="InterPro"/>
</dbReference>
<dbReference type="GO" id="GO:0003746">
    <property type="term" value="F:translation elongation factor activity"/>
    <property type="evidence" value="ECO:0007669"/>
    <property type="project" value="UniProtKB-UniRule"/>
</dbReference>
<dbReference type="CDD" id="cd01884">
    <property type="entry name" value="EF_Tu"/>
    <property type="match status" value="1"/>
</dbReference>
<dbReference type="CDD" id="cd03697">
    <property type="entry name" value="EFTU_II"/>
    <property type="match status" value="1"/>
</dbReference>
<dbReference type="CDD" id="cd03707">
    <property type="entry name" value="EFTU_III"/>
    <property type="match status" value="1"/>
</dbReference>
<dbReference type="FunFam" id="2.40.30.10:FF:000001">
    <property type="entry name" value="Elongation factor Tu"/>
    <property type="match status" value="1"/>
</dbReference>
<dbReference type="FunFam" id="3.40.50.300:FF:000003">
    <property type="entry name" value="Elongation factor Tu"/>
    <property type="match status" value="1"/>
</dbReference>
<dbReference type="Gene3D" id="3.40.50.300">
    <property type="entry name" value="P-loop containing nucleotide triphosphate hydrolases"/>
    <property type="match status" value="1"/>
</dbReference>
<dbReference type="Gene3D" id="2.40.30.10">
    <property type="entry name" value="Translation factors"/>
    <property type="match status" value="2"/>
</dbReference>
<dbReference type="HAMAP" id="MF_00118_B">
    <property type="entry name" value="EF_Tu_B"/>
    <property type="match status" value="1"/>
</dbReference>
<dbReference type="InterPro" id="IPR041709">
    <property type="entry name" value="EF-Tu_GTP-bd"/>
</dbReference>
<dbReference type="InterPro" id="IPR050055">
    <property type="entry name" value="EF-Tu_GTPase"/>
</dbReference>
<dbReference type="InterPro" id="IPR004161">
    <property type="entry name" value="EFTu-like_2"/>
</dbReference>
<dbReference type="InterPro" id="IPR033720">
    <property type="entry name" value="EFTU_2"/>
</dbReference>
<dbReference type="InterPro" id="IPR031157">
    <property type="entry name" value="G_TR_CS"/>
</dbReference>
<dbReference type="InterPro" id="IPR027417">
    <property type="entry name" value="P-loop_NTPase"/>
</dbReference>
<dbReference type="InterPro" id="IPR005225">
    <property type="entry name" value="Small_GTP-bd"/>
</dbReference>
<dbReference type="InterPro" id="IPR000795">
    <property type="entry name" value="T_Tr_GTP-bd_dom"/>
</dbReference>
<dbReference type="InterPro" id="IPR009000">
    <property type="entry name" value="Transl_B-barrel_sf"/>
</dbReference>
<dbReference type="InterPro" id="IPR009001">
    <property type="entry name" value="Transl_elong_EF1A/Init_IF2_C"/>
</dbReference>
<dbReference type="InterPro" id="IPR004541">
    <property type="entry name" value="Transl_elong_EFTu/EF1A_bac/org"/>
</dbReference>
<dbReference type="InterPro" id="IPR004160">
    <property type="entry name" value="Transl_elong_EFTu/EF1A_C"/>
</dbReference>
<dbReference type="NCBIfam" id="TIGR00485">
    <property type="entry name" value="EF-Tu"/>
    <property type="match status" value="1"/>
</dbReference>
<dbReference type="NCBIfam" id="NF000766">
    <property type="entry name" value="PRK00049.1"/>
    <property type="match status" value="1"/>
</dbReference>
<dbReference type="NCBIfam" id="NF009372">
    <property type="entry name" value="PRK12735.1"/>
    <property type="match status" value="1"/>
</dbReference>
<dbReference type="NCBIfam" id="NF009373">
    <property type="entry name" value="PRK12736.1"/>
    <property type="match status" value="1"/>
</dbReference>
<dbReference type="NCBIfam" id="TIGR00231">
    <property type="entry name" value="small_GTP"/>
    <property type="match status" value="1"/>
</dbReference>
<dbReference type="PANTHER" id="PTHR43721:SF22">
    <property type="entry name" value="ELONGATION FACTOR TU, MITOCHONDRIAL"/>
    <property type="match status" value="1"/>
</dbReference>
<dbReference type="PANTHER" id="PTHR43721">
    <property type="entry name" value="ELONGATION FACTOR TU-RELATED"/>
    <property type="match status" value="1"/>
</dbReference>
<dbReference type="Pfam" id="PF00009">
    <property type="entry name" value="GTP_EFTU"/>
    <property type="match status" value="1"/>
</dbReference>
<dbReference type="Pfam" id="PF03144">
    <property type="entry name" value="GTP_EFTU_D2"/>
    <property type="match status" value="1"/>
</dbReference>
<dbReference type="Pfam" id="PF03143">
    <property type="entry name" value="GTP_EFTU_D3"/>
    <property type="match status" value="1"/>
</dbReference>
<dbReference type="PRINTS" id="PR00315">
    <property type="entry name" value="ELONGATNFCT"/>
</dbReference>
<dbReference type="SUPFAM" id="SSF50465">
    <property type="entry name" value="EF-Tu/eEF-1alpha/eIF2-gamma C-terminal domain"/>
    <property type="match status" value="1"/>
</dbReference>
<dbReference type="SUPFAM" id="SSF52540">
    <property type="entry name" value="P-loop containing nucleoside triphosphate hydrolases"/>
    <property type="match status" value="1"/>
</dbReference>
<dbReference type="SUPFAM" id="SSF50447">
    <property type="entry name" value="Translation proteins"/>
    <property type="match status" value="1"/>
</dbReference>
<dbReference type="PROSITE" id="PS00301">
    <property type="entry name" value="G_TR_1"/>
    <property type="match status" value="1"/>
</dbReference>
<dbReference type="PROSITE" id="PS51722">
    <property type="entry name" value="G_TR_2"/>
    <property type="match status" value="1"/>
</dbReference>
<gene>
    <name evidence="2" type="primary">tuf</name>
    <name type="ordered locus">BCG9842_B5197</name>
</gene>
<organism>
    <name type="scientific">Bacillus cereus (strain G9842)</name>
    <dbReference type="NCBI Taxonomy" id="405531"/>
    <lineage>
        <taxon>Bacteria</taxon>
        <taxon>Bacillati</taxon>
        <taxon>Bacillota</taxon>
        <taxon>Bacilli</taxon>
        <taxon>Bacillales</taxon>
        <taxon>Bacillaceae</taxon>
        <taxon>Bacillus</taxon>
        <taxon>Bacillus cereus group</taxon>
    </lineage>
</organism>
<name>EFTU_BACC2</name>